<keyword id="KW-0004">4Fe-4S</keyword>
<keyword id="KW-0028">Amino-acid biosynthesis</keyword>
<keyword id="KW-0198">Cysteine biosynthesis</keyword>
<keyword id="KW-0349">Heme</keyword>
<keyword id="KW-0408">Iron</keyword>
<keyword id="KW-0411">Iron-sulfur</keyword>
<keyword id="KW-0479">Metal-binding</keyword>
<keyword id="KW-0521">NADP</keyword>
<keyword id="KW-0560">Oxidoreductase</keyword>
<feature type="chain" id="PRO_0000388498" description="Sulfite reductase [NADPH] hemoprotein beta-component">
    <location>
        <begin position="1"/>
        <end position="616"/>
    </location>
</feature>
<feature type="region of interest" description="Disordered" evidence="2">
    <location>
        <begin position="1"/>
        <end position="35"/>
    </location>
</feature>
<feature type="compositionally biased region" description="Basic and acidic residues" evidence="2">
    <location>
        <begin position="1"/>
        <end position="10"/>
    </location>
</feature>
<feature type="compositionally biased region" description="Low complexity" evidence="2">
    <location>
        <begin position="11"/>
        <end position="22"/>
    </location>
</feature>
<feature type="binding site" evidence="1">
    <location>
        <position position="470"/>
    </location>
    <ligand>
        <name>[4Fe-4S] cluster</name>
        <dbReference type="ChEBI" id="CHEBI:49883"/>
    </ligand>
</feature>
<feature type="binding site" evidence="1">
    <location>
        <position position="476"/>
    </location>
    <ligand>
        <name>[4Fe-4S] cluster</name>
        <dbReference type="ChEBI" id="CHEBI:49883"/>
    </ligand>
</feature>
<feature type="binding site" evidence="1">
    <location>
        <position position="515"/>
    </location>
    <ligand>
        <name>[4Fe-4S] cluster</name>
        <dbReference type="ChEBI" id="CHEBI:49883"/>
    </ligand>
</feature>
<feature type="binding site" evidence="1">
    <location>
        <position position="519"/>
    </location>
    <ligand>
        <name>[4Fe-4S] cluster</name>
        <dbReference type="ChEBI" id="CHEBI:49883"/>
    </ligand>
</feature>
<feature type="binding site" description="axial binding residue" evidence="1">
    <location>
        <position position="519"/>
    </location>
    <ligand>
        <name>siroheme</name>
        <dbReference type="ChEBI" id="CHEBI:60052"/>
    </ligand>
    <ligandPart>
        <name>Fe</name>
        <dbReference type="ChEBI" id="CHEBI:18248"/>
    </ligandPart>
</feature>
<organism>
    <name type="scientific">Methylobacterium radiotolerans (strain ATCC 27329 / DSM 1819 / JCM 2831 / NBRC 15690 / NCIMB 10815 / 0-1)</name>
    <dbReference type="NCBI Taxonomy" id="426355"/>
    <lineage>
        <taxon>Bacteria</taxon>
        <taxon>Pseudomonadati</taxon>
        <taxon>Pseudomonadota</taxon>
        <taxon>Alphaproteobacteria</taxon>
        <taxon>Hyphomicrobiales</taxon>
        <taxon>Methylobacteriaceae</taxon>
        <taxon>Methylobacterium</taxon>
    </lineage>
</organism>
<dbReference type="EC" id="1.8.1.2" evidence="1"/>
<dbReference type="EMBL" id="CP001001">
    <property type="protein sequence ID" value="ACB23778.1"/>
    <property type="molecule type" value="Genomic_DNA"/>
</dbReference>
<dbReference type="RefSeq" id="WP_012318765.1">
    <property type="nucleotide sequence ID" value="NC_010505.1"/>
</dbReference>
<dbReference type="SMR" id="B1LS97"/>
<dbReference type="STRING" id="426355.Mrad2831_1783"/>
<dbReference type="GeneID" id="6137812"/>
<dbReference type="KEGG" id="mrd:Mrad2831_1783"/>
<dbReference type="eggNOG" id="COG0155">
    <property type="taxonomic scope" value="Bacteria"/>
</dbReference>
<dbReference type="HOGENOM" id="CLU_001975_3_2_5"/>
<dbReference type="OrthoDB" id="9803707at2"/>
<dbReference type="UniPathway" id="UPA00140">
    <property type="reaction ID" value="UER00207"/>
</dbReference>
<dbReference type="Proteomes" id="UP000006589">
    <property type="component" value="Chromosome"/>
</dbReference>
<dbReference type="GO" id="GO:0009337">
    <property type="term" value="C:sulfite reductase complex (NADPH)"/>
    <property type="evidence" value="ECO:0007669"/>
    <property type="project" value="InterPro"/>
</dbReference>
<dbReference type="GO" id="GO:0051539">
    <property type="term" value="F:4 iron, 4 sulfur cluster binding"/>
    <property type="evidence" value="ECO:0007669"/>
    <property type="project" value="UniProtKB-KW"/>
</dbReference>
<dbReference type="GO" id="GO:0020037">
    <property type="term" value="F:heme binding"/>
    <property type="evidence" value="ECO:0007669"/>
    <property type="project" value="InterPro"/>
</dbReference>
<dbReference type="GO" id="GO:0046872">
    <property type="term" value="F:metal ion binding"/>
    <property type="evidence" value="ECO:0007669"/>
    <property type="project" value="UniProtKB-KW"/>
</dbReference>
<dbReference type="GO" id="GO:0050661">
    <property type="term" value="F:NADP binding"/>
    <property type="evidence" value="ECO:0007669"/>
    <property type="project" value="InterPro"/>
</dbReference>
<dbReference type="GO" id="GO:0050311">
    <property type="term" value="F:sulfite reductase (ferredoxin) activity"/>
    <property type="evidence" value="ECO:0007669"/>
    <property type="project" value="TreeGrafter"/>
</dbReference>
<dbReference type="GO" id="GO:0004783">
    <property type="term" value="F:sulfite reductase (NADPH) activity"/>
    <property type="evidence" value="ECO:0007669"/>
    <property type="project" value="UniProtKB-UniRule"/>
</dbReference>
<dbReference type="GO" id="GO:0019344">
    <property type="term" value="P:cysteine biosynthetic process"/>
    <property type="evidence" value="ECO:0007669"/>
    <property type="project" value="UniProtKB-KW"/>
</dbReference>
<dbReference type="GO" id="GO:0070814">
    <property type="term" value="P:hydrogen sulfide biosynthetic process"/>
    <property type="evidence" value="ECO:0007669"/>
    <property type="project" value="UniProtKB-UniRule"/>
</dbReference>
<dbReference type="GO" id="GO:0000103">
    <property type="term" value="P:sulfate assimilation"/>
    <property type="evidence" value="ECO:0007669"/>
    <property type="project" value="UniProtKB-UniRule"/>
</dbReference>
<dbReference type="FunFam" id="3.30.413.10:FF:000003">
    <property type="entry name" value="Sulfite reductase [NADPH] hemoprotein beta-component"/>
    <property type="match status" value="1"/>
</dbReference>
<dbReference type="FunFam" id="3.30.413.10:FF:000004">
    <property type="entry name" value="Sulfite reductase [NADPH] hemoprotein beta-component"/>
    <property type="match status" value="1"/>
</dbReference>
<dbReference type="Gene3D" id="3.30.413.10">
    <property type="entry name" value="Sulfite Reductase Hemoprotein, domain 1"/>
    <property type="match status" value="2"/>
</dbReference>
<dbReference type="HAMAP" id="MF_01540">
    <property type="entry name" value="CysI"/>
    <property type="match status" value="1"/>
</dbReference>
<dbReference type="InterPro" id="IPR011786">
    <property type="entry name" value="CysI"/>
</dbReference>
<dbReference type="InterPro" id="IPR005117">
    <property type="entry name" value="NiRdtase/SiRdtase_haem-b_fer"/>
</dbReference>
<dbReference type="InterPro" id="IPR036136">
    <property type="entry name" value="Nit/Sulf_reduc_fer-like_dom_sf"/>
</dbReference>
<dbReference type="InterPro" id="IPR006067">
    <property type="entry name" value="NO2/SO3_Rdtase_4Fe4S_dom"/>
</dbReference>
<dbReference type="InterPro" id="IPR045169">
    <property type="entry name" value="NO2/SO3_Rdtase_4Fe4S_prot"/>
</dbReference>
<dbReference type="InterPro" id="IPR045854">
    <property type="entry name" value="NO2/SO3_Rdtase_4Fe4S_sf"/>
</dbReference>
<dbReference type="InterPro" id="IPR006066">
    <property type="entry name" value="NO2/SO3_Rdtase_FeS/sirohaem_BS"/>
</dbReference>
<dbReference type="NCBIfam" id="TIGR02041">
    <property type="entry name" value="CysI"/>
    <property type="match status" value="1"/>
</dbReference>
<dbReference type="NCBIfam" id="NF010029">
    <property type="entry name" value="PRK13504.1"/>
    <property type="match status" value="1"/>
</dbReference>
<dbReference type="PANTHER" id="PTHR11493:SF47">
    <property type="entry name" value="SULFITE REDUCTASE [NADPH] SUBUNIT BETA"/>
    <property type="match status" value="1"/>
</dbReference>
<dbReference type="PANTHER" id="PTHR11493">
    <property type="entry name" value="SULFITE REDUCTASE [NADPH] SUBUNIT BETA-RELATED"/>
    <property type="match status" value="1"/>
</dbReference>
<dbReference type="Pfam" id="PF01077">
    <property type="entry name" value="NIR_SIR"/>
    <property type="match status" value="1"/>
</dbReference>
<dbReference type="Pfam" id="PF03460">
    <property type="entry name" value="NIR_SIR_ferr"/>
    <property type="match status" value="2"/>
</dbReference>
<dbReference type="PRINTS" id="PR00397">
    <property type="entry name" value="SIROHAEM"/>
</dbReference>
<dbReference type="SUPFAM" id="SSF56014">
    <property type="entry name" value="Nitrite and sulphite reductase 4Fe-4S domain-like"/>
    <property type="match status" value="2"/>
</dbReference>
<dbReference type="SUPFAM" id="SSF55124">
    <property type="entry name" value="Nitrite/Sulfite reductase N-terminal domain-like"/>
    <property type="match status" value="2"/>
</dbReference>
<dbReference type="PROSITE" id="PS00365">
    <property type="entry name" value="NIR_SIR"/>
    <property type="match status" value="1"/>
</dbReference>
<reference key="1">
    <citation type="submission" date="2008-03" db="EMBL/GenBank/DDBJ databases">
        <title>Complete sequence of chromosome of Methylobacterium radiotolerans JCM 2831.</title>
        <authorList>
            <consortium name="US DOE Joint Genome Institute"/>
            <person name="Copeland A."/>
            <person name="Lucas S."/>
            <person name="Lapidus A."/>
            <person name="Glavina del Rio T."/>
            <person name="Dalin E."/>
            <person name="Tice H."/>
            <person name="Bruce D."/>
            <person name="Goodwin L."/>
            <person name="Pitluck S."/>
            <person name="Kiss H."/>
            <person name="Brettin T."/>
            <person name="Detter J.C."/>
            <person name="Han C."/>
            <person name="Kuske C.R."/>
            <person name="Schmutz J."/>
            <person name="Larimer F."/>
            <person name="Land M."/>
            <person name="Hauser L."/>
            <person name="Kyrpides N."/>
            <person name="Mikhailova N."/>
            <person name="Marx C.J."/>
            <person name="Richardson P."/>
        </authorList>
    </citation>
    <scope>NUCLEOTIDE SEQUENCE [LARGE SCALE GENOMIC DNA]</scope>
    <source>
        <strain>ATCC 27329 / DSM 1819 / JCM 2831 / NBRC 15690 / NCIMB 10815 / 0-1</strain>
    </source>
</reference>
<name>CYSI_METRJ</name>
<evidence type="ECO:0000255" key="1">
    <source>
        <dbReference type="HAMAP-Rule" id="MF_01540"/>
    </source>
</evidence>
<evidence type="ECO:0000256" key="2">
    <source>
        <dbReference type="SAM" id="MobiDB-lite"/>
    </source>
</evidence>
<gene>
    <name evidence="1" type="primary">cysI</name>
    <name type="ordered locus">Mrad2831_1783</name>
</gene>
<protein>
    <recommendedName>
        <fullName evidence="1">Sulfite reductase [NADPH] hemoprotein beta-component</fullName>
        <shortName evidence="1">SiR-HP</shortName>
        <shortName evidence="1">SiRHP</shortName>
        <ecNumber evidence="1">1.8.1.2</ecNumber>
    </recommendedName>
</protein>
<proteinExistence type="inferred from homology"/>
<comment type="function">
    <text evidence="1">Component of the sulfite reductase complex that catalyzes the 6-electron reduction of sulfite to sulfide. This is one of several activities required for the biosynthesis of L-cysteine from sulfate.</text>
</comment>
<comment type="catalytic activity">
    <reaction evidence="1">
        <text>hydrogen sulfide + 3 NADP(+) + 3 H2O = sulfite + 3 NADPH + 4 H(+)</text>
        <dbReference type="Rhea" id="RHEA:13801"/>
        <dbReference type="ChEBI" id="CHEBI:15377"/>
        <dbReference type="ChEBI" id="CHEBI:15378"/>
        <dbReference type="ChEBI" id="CHEBI:17359"/>
        <dbReference type="ChEBI" id="CHEBI:29919"/>
        <dbReference type="ChEBI" id="CHEBI:57783"/>
        <dbReference type="ChEBI" id="CHEBI:58349"/>
        <dbReference type="EC" id="1.8.1.2"/>
    </reaction>
</comment>
<comment type="cofactor">
    <cofactor evidence="1">
        <name>siroheme</name>
        <dbReference type="ChEBI" id="CHEBI:60052"/>
    </cofactor>
    <text evidence="1">Binds 1 siroheme per subunit.</text>
</comment>
<comment type="cofactor">
    <cofactor evidence="1">
        <name>[4Fe-4S] cluster</name>
        <dbReference type="ChEBI" id="CHEBI:49883"/>
    </cofactor>
    <text evidence="1">Binds 1 [4Fe-4S] cluster per subunit.</text>
</comment>
<comment type="pathway">
    <text evidence="1">Sulfur metabolism; hydrogen sulfide biosynthesis; hydrogen sulfide from sulfite (NADPH route): step 1/1.</text>
</comment>
<comment type="subunit">
    <text evidence="1">Alpha(8)-beta(8). The alpha component is a flavoprotein, the beta component is a hemoprotein.</text>
</comment>
<comment type="similarity">
    <text evidence="1">Belongs to the nitrite and sulfite reductase 4Fe-4S domain family.</text>
</comment>
<sequence>MDDHSPRDAAETPAPGPAATPAKRVYETPPTSRPITDAEAARAEKLAANEHIKIASGYLRGTLADGLLKHATGAISEDDGQLVKFHGMYLQDDRDLRPERTKKKLDKAYSFMIRLRIAGGVITPKQWLILDDIARTYAGGALRATTRQTFQYHGVIKSNLKRTMAAIDGALLDTIAACGDVNRNVMAATNPAQTGAHKAAYQLAKDISDSLLPKTSAWREIWLDGERVVGGEDEAEVEPVYGRTYLPRKFKTVVAVPPSNEVDIFAHDLGFIAILDKKNQVTGWNVTVGGGMGMTHGEPDTFPRTADVMGFVKPEDALKVAEAVMTVQRDWGNRKNRKNARLKYTIERYGLDAFRAEVEKRVGKKLGAPKPFTFTGNGDRYGWVEGDDGRHHLTLYVPSGRIKDIDGGPQFLSGLRRIAEVHQGDFRLTGNQNVIIANVPAEKRAEIDALVDEYGLTRGASALRRSSLACVALPTCGLALAESERYLPDLMTELEESLASHGLAEEEITIRSTGCPNGCARPFISEIGLVGRGPERYHLYLGAAHDGSRLSKLYKEDVAASEIRDTLDPLFADYARGRQPGEHFGDYLIRAGHVARTTNGPDFHDRTGALKPATLG</sequence>
<accession>B1LS97</accession>